<name>VSTM1_HUMAN</name>
<dbReference type="EMBL" id="FJ584316">
    <property type="protein sequence ID" value="ACU00108.1"/>
    <property type="molecule type" value="mRNA"/>
</dbReference>
<dbReference type="EMBL" id="FJ584317">
    <property type="protein sequence ID" value="ACU00109.1"/>
    <property type="molecule type" value="mRNA"/>
</dbReference>
<dbReference type="EMBL" id="FJ584318">
    <property type="protein sequence ID" value="ACU00110.1"/>
    <property type="molecule type" value="mRNA"/>
</dbReference>
<dbReference type="EMBL" id="FN398145">
    <property type="protein sequence ID" value="CAZ61324.1"/>
    <property type="molecule type" value="mRNA"/>
</dbReference>
<dbReference type="EMBL" id="DQ479397">
    <property type="protein sequence ID" value="ABF19807.1"/>
    <property type="molecule type" value="mRNA"/>
</dbReference>
<dbReference type="EMBL" id="AY358542">
    <property type="protein sequence ID" value="AAQ88906.1"/>
    <property type="molecule type" value="mRNA"/>
</dbReference>
<dbReference type="EMBL" id="AC012314">
    <property type="status" value="NOT_ANNOTATED_CDS"/>
    <property type="molecule type" value="Genomic_DNA"/>
</dbReference>
<dbReference type="EMBL" id="BC100942">
    <property type="protein sequence ID" value="AAI00943.1"/>
    <property type="molecule type" value="mRNA"/>
</dbReference>
<dbReference type="EMBL" id="BC100943">
    <property type="protein sequence ID" value="AAI00944.1"/>
    <property type="molecule type" value="mRNA"/>
</dbReference>
<dbReference type="CCDS" id="CCDS12872.1">
    <molecule id="Q6UX27-1"/>
</dbReference>
<dbReference type="CCDS" id="CCDS74442.1">
    <molecule id="Q6UX27-2"/>
</dbReference>
<dbReference type="RefSeq" id="NP_001275720.1">
    <property type="nucleotide sequence ID" value="NM_001288791.1"/>
</dbReference>
<dbReference type="RefSeq" id="NP_001275721.1">
    <molecule id="Q6UX27-2"/>
    <property type="nucleotide sequence ID" value="NM_001288792.2"/>
</dbReference>
<dbReference type="RefSeq" id="NP_001275722.1">
    <property type="nucleotide sequence ID" value="NM_001288793.1"/>
</dbReference>
<dbReference type="RefSeq" id="NP_940883.2">
    <molecule id="Q6UX27-1"/>
    <property type="nucleotide sequence ID" value="NM_198481.4"/>
</dbReference>
<dbReference type="RefSeq" id="XP_016882155.1">
    <molecule id="Q6UX27-3"/>
    <property type="nucleotide sequence ID" value="XM_017026666.2"/>
</dbReference>
<dbReference type="RefSeq" id="XP_054186139.1">
    <molecule id="Q6UX27-3"/>
    <property type="nucleotide sequence ID" value="XM_054330164.1"/>
</dbReference>
<dbReference type="RefSeq" id="XP_054186447.1">
    <molecule id="Q6UX27-3"/>
    <property type="nucleotide sequence ID" value="XM_054330472.1"/>
</dbReference>
<dbReference type="RefSeq" id="XP_054186700.1">
    <molecule id="Q6UX27-3"/>
    <property type="nucleotide sequence ID" value="XM_054330725.1"/>
</dbReference>
<dbReference type="RefSeq" id="XP_054187209.1">
    <molecule id="Q6UX27-3"/>
    <property type="nucleotide sequence ID" value="XM_054331234.1"/>
</dbReference>
<dbReference type="RefSeq" id="XP_054187484.1">
    <molecule id="Q6UX27-3"/>
    <property type="nucleotide sequence ID" value="XM_054331509.1"/>
</dbReference>
<dbReference type="SMR" id="Q6UX27"/>
<dbReference type="BioGRID" id="129868">
    <property type="interactions" value="61"/>
</dbReference>
<dbReference type="FunCoup" id="Q6UX27">
    <property type="interactions" value="43"/>
</dbReference>
<dbReference type="IntAct" id="Q6UX27">
    <property type="interactions" value="53"/>
</dbReference>
<dbReference type="STRING" id="9606.ENSP00000343366"/>
<dbReference type="GlyCosmos" id="Q6UX27">
    <property type="glycosylation" value="2 sites, No reported glycans"/>
</dbReference>
<dbReference type="GlyGen" id="Q6UX27">
    <property type="glycosylation" value="2 sites"/>
</dbReference>
<dbReference type="BioMuta" id="VSTM1"/>
<dbReference type="DMDM" id="296452860"/>
<dbReference type="MassIVE" id="Q6UX27"/>
<dbReference type="PaxDb" id="9606-ENSP00000343366"/>
<dbReference type="PeptideAtlas" id="Q6UX27"/>
<dbReference type="Antibodypedia" id="71979">
    <property type="antibodies" value="31 antibodies from 12 providers"/>
</dbReference>
<dbReference type="DNASU" id="284415"/>
<dbReference type="Ensembl" id="ENST00000338372.7">
    <molecule id="Q6UX27-1"/>
    <property type="protein sequence ID" value="ENSP00000343366.2"/>
    <property type="gene ID" value="ENSG00000189068.11"/>
</dbReference>
<dbReference type="Ensembl" id="ENST00000376626.5">
    <molecule id="Q6UX27-2"/>
    <property type="protein sequence ID" value="ENSP00000365813.1"/>
    <property type="gene ID" value="ENSG00000189068.11"/>
</dbReference>
<dbReference type="Ensembl" id="ENST00000447872.5">
    <molecule id="Q6UX27-3"/>
    <property type="protein sequence ID" value="ENSP00000401926.1"/>
    <property type="gene ID" value="ENSG00000189068.11"/>
</dbReference>
<dbReference type="Ensembl" id="ENST00000610629.4">
    <molecule id="Q6UX27-1"/>
    <property type="protein sequence ID" value="ENSP00000482197.1"/>
    <property type="gene ID" value="ENSG00000274953.4"/>
</dbReference>
<dbReference type="Ensembl" id="ENST00000610794.4">
    <molecule id="Q6UX27-1"/>
    <property type="protein sequence ID" value="ENSP00000478582.1"/>
    <property type="gene ID" value="ENSG00000276159.4"/>
</dbReference>
<dbReference type="Ensembl" id="ENST00000610804.4">
    <molecule id="Q6UX27-1"/>
    <property type="protein sequence ID" value="ENSP00000480533.1"/>
    <property type="gene ID" value="ENSG00000274887.4"/>
</dbReference>
<dbReference type="Ensembl" id="ENST00000611293.4">
    <molecule id="Q6UX27-1"/>
    <property type="protein sequence ID" value="ENSP00000482555.1"/>
    <property type="gene ID" value="ENSG00000275330.4"/>
</dbReference>
<dbReference type="Ensembl" id="ENST00000612105.4">
    <molecule id="Q6UX27-1"/>
    <property type="protein sequence ID" value="ENSP00000483412.1"/>
    <property type="gene ID" value="ENSG00000275577.4"/>
</dbReference>
<dbReference type="Ensembl" id="ENST00000612436.4">
    <molecule id="Q6UX27-1"/>
    <property type="protein sequence ID" value="ENSP00000482985.1"/>
    <property type="gene ID" value="ENSG00000276066.4"/>
</dbReference>
<dbReference type="Ensembl" id="ENST00000612864.4">
    <molecule id="Q6UX27-3"/>
    <property type="protein sequence ID" value="ENSP00000481977.1"/>
    <property type="gene ID" value="ENSG00000275962.4"/>
</dbReference>
<dbReference type="Ensembl" id="ENST00000613042.4">
    <molecule id="Q6UX27-2"/>
    <property type="protein sequence ID" value="ENSP00000479748.1"/>
    <property type="gene ID" value="ENSG00000275577.4"/>
</dbReference>
<dbReference type="Ensembl" id="ENST00000615235.4">
    <molecule id="Q6UX27-2"/>
    <property type="protein sequence ID" value="ENSP00000479198.1"/>
    <property type="gene ID" value="ENSG00000277607.4"/>
</dbReference>
<dbReference type="Ensembl" id="ENST00000615508.4">
    <molecule id="Q6UX27-2"/>
    <property type="protein sequence ID" value="ENSP00000484886.1"/>
    <property type="gene ID" value="ENSG00000276066.4"/>
</dbReference>
<dbReference type="Ensembl" id="ENST00000616717.4">
    <molecule id="Q6UX27-2"/>
    <property type="protein sequence ID" value="ENSP00000480383.1"/>
    <property type="gene ID" value="ENSG00000274953.4"/>
</dbReference>
<dbReference type="Ensembl" id="ENST00000617115.4">
    <molecule id="Q6UX27-2"/>
    <property type="protein sequence ID" value="ENSP00000481140.1"/>
    <property type="gene ID" value="ENSG00000275330.4"/>
</dbReference>
<dbReference type="Ensembl" id="ENST00000617281.4">
    <molecule id="Q6UX27-1"/>
    <property type="protein sequence ID" value="ENSP00000480547.1"/>
    <property type="gene ID" value="ENSG00000277607.4"/>
</dbReference>
<dbReference type="Ensembl" id="ENST00000617776.4">
    <molecule id="Q6UX27-2"/>
    <property type="protein sequence ID" value="ENSP00000484699.1"/>
    <property type="gene ID" value="ENSG00000275962.4"/>
</dbReference>
<dbReference type="Ensembl" id="ENST00000617862.4">
    <molecule id="Q6UX27-1"/>
    <property type="protein sequence ID" value="ENSP00000484844.1"/>
    <property type="gene ID" value="ENSG00000276363.4"/>
</dbReference>
<dbReference type="Ensembl" id="ENST00000619024.4">
    <molecule id="Q6UX27-2"/>
    <property type="protein sequence ID" value="ENSP00000483411.1"/>
    <property type="gene ID" value="ENSG00000276159.4"/>
</dbReference>
<dbReference type="Ensembl" id="ENST00000619921.4">
    <molecule id="Q6UX27-2"/>
    <property type="protein sequence ID" value="ENSP00000483797.1"/>
    <property type="gene ID" value="ENSG00000276363.4"/>
</dbReference>
<dbReference type="Ensembl" id="ENST00000620474.4">
    <molecule id="Q6UX27-1"/>
    <property type="protein sequence ID" value="ENSP00000484806.1"/>
    <property type="gene ID" value="ENSG00000275962.4"/>
</dbReference>
<dbReference type="Ensembl" id="ENST00000622762.4">
    <molecule id="Q6UX27-2"/>
    <property type="protein sequence ID" value="ENSP00000483104.1"/>
    <property type="gene ID" value="ENSG00000274887.4"/>
</dbReference>
<dbReference type="GeneID" id="284415"/>
<dbReference type="KEGG" id="hsa:284415"/>
<dbReference type="MANE-Select" id="ENST00000338372.7">
    <property type="protein sequence ID" value="ENSP00000343366.2"/>
    <property type="RefSeq nucleotide sequence ID" value="NM_198481.4"/>
    <property type="RefSeq protein sequence ID" value="NP_940883.2"/>
</dbReference>
<dbReference type="UCSC" id="uc002qcw.5">
    <molecule id="Q6UX27-1"/>
    <property type="organism name" value="human"/>
</dbReference>
<dbReference type="AGR" id="HGNC:29455"/>
<dbReference type="CTD" id="284415"/>
<dbReference type="DisGeNET" id="284415"/>
<dbReference type="GeneCards" id="VSTM1"/>
<dbReference type="HGNC" id="HGNC:29455">
    <property type="gene designation" value="VSTM1"/>
</dbReference>
<dbReference type="HPA" id="ENSG00000189068">
    <property type="expression patterns" value="Tissue enriched (bone)"/>
</dbReference>
<dbReference type="neXtProt" id="NX_Q6UX27"/>
<dbReference type="OpenTargets" id="ENSG00000189068"/>
<dbReference type="PharmGKB" id="PA147357166"/>
<dbReference type="VEuPathDB" id="HostDB:ENSG00000189068"/>
<dbReference type="eggNOG" id="ENOG502SXQ3">
    <property type="taxonomic scope" value="Eukaryota"/>
</dbReference>
<dbReference type="GeneTree" id="ENSGT01100000263478"/>
<dbReference type="HOGENOM" id="CLU_103389_0_0_1"/>
<dbReference type="InParanoid" id="Q6UX27"/>
<dbReference type="OMA" id="SHEWSEK"/>
<dbReference type="OrthoDB" id="9837241at2759"/>
<dbReference type="PAN-GO" id="Q6UX27">
    <property type="GO annotations" value="0 GO annotations based on evolutionary models"/>
</dbReference>
<dbReference type="PhylomeDB" id="Q6UX27"/>
<dbReference type="TreeFam" id="TF336644"/>
<dbReference type="PathwayCommons" id="Q6UX27"/>
<dbReference type="SignaLink" id="Q6UX27"/>
<dbReference type="BioGRID-ORCS" id="284415">
    <property type="hits" value="6 hits in 1135 CRISPR screens"/>
</dbReference>
<dbReference type="ChiTaRS" id="VSTM1">
    <property type="organism name" value="human"/>
</dbReference>
<dbReference type="GenomeRNAi" id="284415"/>
<dbReference type="Pharos" id="Q6UX27">
    <property type="development level" value="Tbio"/>
</dbReference>
<dbReference type="PRO" id="PR:Q6UX27"/>
<dbReference type="Proteomes" id="UP000005640">
    <property type="component" value="Chromosome 19"/>
</dbReference>
<dbReference type="RNAct" id="Q6UX27">
    <property type="molecule type" value="protein"/>
</dbReference>
<dbReference type="Bgee" id="ENSG00000189068">
    <property type="expression patterns" value="Expressed in monocyte and 86 other cell types or tissues"/>
</dbReference>
<dbReference type="ExpressionAtlas" id="Q6UX27">
    <property type="expression patterns" value="baseline and differential"/>
</dbReference>
<dbReference type="GO" id="GO:0005615">
    <property type="term" value="C:extracellular space"/>
    <property type="evidence" value="ECO:0007669"/>
    <property type="project" value="UniProtKB-KW"/>
</dbReference>
<dbReference type="GO" id="GO:0005886">
    <property type="term" value="C:plasma membrane"/>
    <property type="evidence" value="ECO:0000318"/>
    <property type="project" value="GO_Central"/>
</dbReference>
<dbReference type="GO" id="GO:0005125">
    <property type="term" value="F:cytokine activity"/>
    <property type="evidence" value="ECO:0007669"/>
    <property type="project" value="UniProtKB-KW"/>
</dbReference>
<dbReference type="GO" id="GO:0002764">
    <property type="term" value="P:immune response-regulating signaling pathway"/>
    <property type="evidence" value="ECO:0000318"/>
    <property type="project" value="GO_Central"/>
</dbReference>
<dbReference type="GO" id="GO:0002376">
    <property type="term" value="P:immune system process"/>
    <property type="evidence" value="ECO:0007669"/>
    <property type="project" value="UniProtKB-KW"/>
</dbReference>
<dbReference type="FunFam" id="2.60.40.10:FF:000049">
    <property type="entry name" value="Leukocyte immunoglobulin-like receptor subfamily B member 1"/>
    <property type="match status" value="1"/>
</dbReference>
<dbReference type="Gene3D" id="2.60.40.10">
    <property type="entry name" value="Immunoglobulins"/>
    <property type="match status" value="1"/>
</dbReference>
<dbReference type="InterPro" id="IPR007110">
    <property type="entry name" value="Ig-like_dom"/>
</dbReference>
<dbReference type="InterPro" id="IPR036179">
    <property type="entry name" value="Ig-like_dom_sf"/>
</dbReference>
<dbReference type="InterPro" id="IPR013783">
    <property type="entry name" value="Ig-like_fold"/>
</dbReference>
<dbReference type="InterPro" id="IPR050412">
    <property type="entry name" value="Ig-like_Receptors_ImmuneReg"/>
</dbReference>
<dbReference type="InterPro" id="IPR003599">
    <property type="entry name" value="Ig_sub"/>
</dbReference>
<dbReference type="PANTHER" id="PTHR11738">
    <property type="entry name" value="MHC CLASS I NK CELL RECEPTOR"/>
    <property type="match status" value="1"/>
</dbReference>
<dbReference type="PANTHER" id="PTHR11738:SF180">
    <property type="entry name" value="V-SET AND TRANSMEMBRANE DOMAIN-CONTAINING PROTEIN 1"/>
    <property type="match status" value="1"/>
</dbReference>
<dbReference type="Pfam" id="PF13895">
    <property type="entry name" value="Ig_2"/>
    <property type="match status" value="1"/>
</dbReference>
<dbReference type="SMART" id="SM00409">
    <property type="entry name" value="IG"/>
    <property type="match status" value="1"/>
</dbReference>
<dbReference type="SUPFAM" id="SSF48726">
    <property type="entry name" value="Immunoglobulin"/>
    <property type="match status" value="1"/>
</dbReference>
<dbReference type="PROSITE" id="PS50835">
    <property type="entry name" value="IG_LIKE"/>
    <property type="match status" value="1"/>
</dbReference>
<proteinExistence type="evidence at protein level"/>
<reference key="1">
    <citation type="journal article" date="2012" name="Cell. Immunol.">
        <title>VSTM1-v2, a novel soluble glycoprotein, promotes the differentiation and activation of Th17 cells.</title>
        <authorList>
            <person name="Guo X."/>
            <person name="Zhang Y."/>
            <person name="Wang P."/>
            <person name="Li T."/>
            <person name="Fu W."/>
            <person name="Mo X."/>
            <person name="Shi T."/>
            <person name="Zhang Z."/>
            <person name="Chen Y."/>
            <person name="Ma D."/>
            <person name="Han W."/>
        </authorList>
    </citation>
    <scope>NUCLEOTIDE SEQUENCE [MRNA] (ISOFORMS 1 AND 2)</scope>
    <scope>FUNCTION (ISOFORM 2)</scope>
    <scope>SUBCELLULAR LOCATION (ISOFORM 2)</scope>
    <scope>VARIANT GLY-163</scope>
    <source>
        <tissue>Granulocyte</tissue>
        <tissue>Spleen</tissue>
    </source>
</reference>
<reference key="2">
    <citation type="journal article" date="2010" name="J. Immunol.">
        <title>Signal inhibitory receptor on leukocytes-1 is a novel functional inhibitory immune receptor expressed on human phagocytes.</title>
        <authorList>
            <person name="Steevels T.A."/>
            <person name="Lebbink R.J."/>
            <person name="Westerlaken G.H."/>
            <person name="Coffer P.J."/>
            <person name="Meyaard L."/>
        </authorList>
    </citation>
    <scope>NUCLEOTIDE SEQUENCE [MRNA] (ISOFORM 1)</scope>
    <scope>FUNCTION (ISOFORM 1)</scope>
    <scope>ITIM MOTIF</scope>
    <scope>TISSUE SPECIFICITY</scope>
    <source>
        <tissue>Peripheral blood monocyte</tissue>
    </source>
</reference>
<reference key="3">
    <citation type="submission" date="2006-04" db="EMBL/GenBank/DDBJ databases">
        <title>OSCAR-like transcript-1 (OLT-1) mRNA.</title>
        <authorList>
            <person name="Barrow A.D."/>
            <person name="de Bono B."/>
            <person name="Trowsdale J."/>
        </authorList>
    </citation>
    <scope>NUCLEOTIDE SEQUENCE [MRNA] (ISOFORM 1)</scope>
    <scope>VARIANT GLY-163</scope>
    <source>
        <tissue>Bone marrow</tissue>
    </source>
</reference>
<reference key="4">
    <citation type="journal article" date="2003" name="Genome Res.">
        <title>The secreted protein discovery initiative (SPDI), a large-scale effort to identify novel human secreted and transmembrane proteins: a bioinformatics assessment.</title>
        <authorList>
            <person name="Clark H.F."/>
            <person name="Gurney A.L."/>
            <person name="Abaya E."/>
            <person name="Baker K."/>
            <person name="Baldwin D.T."/>
            <person name="Brush J."/>
            <person name="Chen J."/>
            <person name="Chow B."/>
            <person name="Chui C."/>
            <person name="Crowley C."/>
            <person name="Currell B."/>
            <person name="Deuel B."/>
            <person name="Dowd P."/>
            <person name="Eaton D."/>
            <person name="Foster J.S."/>
            <person name="Grimaldi C."/>
            <person name="Gu Q."/>
            <person name="Hass P.E."/>
            <person name="Heldens S."/>
            <person name="Huang A."/>
            <person name="Kim H.S."/>
            <person name="Klimowski L."/>
            <person name="Jin Y."/>
            <person name="Johnson S."/>
            <person name="Lee J."/>
            <person name="Lewis L."/>
            <person name="Liao D."/>
            <person name="Mark M.R."/>
            <person name="Robbie E."/>
            <person name="Sanchez C."/>
            <person name="Schoenfeld J."/>
            <person name="Seshagiri S."/>
            <person name="Simmons L."/>
            <person name="Singh J."/>
            <person name="Smith V."/>
            <person name="Stinson J."/>
            <person name="Vagts A."/>
            <person name="Vandlen R.L."/>
            <person name="Watanabe C."/>
            <person name="Wieand D."/>
            <person name="Woods K."/>
            <person name="Xie M.-H."/>
            <person name="Yansura D.G."/>
            <person name="Yi S."/>
            <person name="Yu G."/>
            <person name="Yuan J."/>
            <person name="Zhang M."/>
            <person name="Zhang Z."/>
            <person name="Goddard A.D."/>
            <person name="Wood W.I."/>
            <person name="Godowski P.J."/>
            <person name="Gray A.M."/>
        </authorList>
    </citation>
    <scope>NUCLEOTIDE SEQUENCE [LARGE SCALE MRNA] (ISOFORM 1)</scope>
    <scope>VARIANT GLY-163</scope>
</reference>
<reference key="5">
    <citation type="journal article" date="2004" name="Nature">
        <title>The DNA sequence and biology of human chromosome 19.</title>
        <authorList>
            <person name="Grimwood J."/>
            <person name="Gordon L.A."/>
            <person name="Olsen A.S."/>
            <person name="Terry A."/>
            <person name="Schmutz J."/>
            <person name="Lamerdin J.E."/>
            <person name="Hellsten U."/>
            <person name="Goodstein D."/>
            <person name="Couronne O."/>
            <person name="Tran-Gyamfi M."/>
            <person name="Aerts A."/>
            <person name="Altherr M."/>
            <person name="Ashworth L."/>
            <person name="Bajorek E."/>
            <person name="Black S."/>
            <person name="Branscomb E."/>
            <person name="Caenepeel S."/>
            <person name="Carrano A.V."/>
            <person name="Caoile C."/>
            <person name="Chan Y.M."/>
            <person name="Christensen M."/>
            <person name="Cleland C.A."/>
            <person name="Copeland A."/>
            <person name="Dalin E."/>
            <person name="Dehal P."/>
            <person name="Denys M."/>
            <person name="Detter J.C."/>
            <person name="Escobar J."/>
            <person name="Flowers D."/>
            <person name="Fotopulos D."/>
            <person name="Garcia C."/>
            <person name="Georgescu A.M."/>
            <person name="Glavina T."/>
            <person name="Gomez M."/>
            <person name="Gonzales E."/>
            <person name="Groza M."/>
            <person name="Hammon N."/>
            <person name="Hawkins T."/>
            <person name="Haydu L."/>
            <person name="Ho I."/>
            <person name="Huang W."/>
            <person name="Israni S."/>
            <person name="Jett J."/>
            <person name="Kadner K."/>
            <person name="Kimball H."/>
            <person name="Kobayashi A."/>
            <person name="Larionov V."/>
            <person name="Leem S.-H."/>
            <person name="Lopez F."/>
            <person name="Lou Y."/>
            <person name="Lowry S."/>
            <person name="Malfatti S."/>
            <person name="Martinez D."/>
            <person name="McCready P.M."/>
            <person name="Medina C."/>
            <person name="Morgan J."/>
            <person name="Nelson K."/>
            <person name="Nolan M."/>
            <person name="Ovcharenko I."/>
            <person name="Pitluck S."/>
            <person name="Pollard M."/>
            <person name="Popkie A.P."/>
            <person name="Predki P."/>
            <person name="Quan G."/>
            <person name="Ramirez L."/>
            <person name="Rash S."/>
            <person name="Retterer J."/>
            <person name="Rodriguez A."/>
            <person name="Rogers S."/>
            <person name="Salamov A."/>
            <person name="Salazar A."/>
            <person name="She X."/>
            <person name="Smith D."/>
            <person name="Slezak T."/>
            <person name="Solovyev V."/>
            <person name="Thayer N."/>
            <person name="Tice H."/>
            <person name="Tsai M."/>
            <person name="Ustaszewska A."/>
            <person name="Vo N."/>
            <person name="Wagner M."/>
            <person name="Wheeler J."/>
            <person name="Wu K."/>
            <person name="Xie G."/>
            <person name="Yang J."/>
            <person name="Dubchak I."/>
            <person name="Furey T.S."/>
            <person name="DeJong P."/>
            <person name="Dickson M."/>
            <person name="Gordon D."/>
            <person name="Eichler E.E."/>
            <person name="Pennacchio L.A."/>
            <person name="Richardson P."/>
            <person name="Stubbs L."/>
            <person name="Rokhsar D.S."/>
            <person name="Myers R.M."/>
            <person name="Rubin E.M."/>
            <person name="Lucas S.M."/>
        </authorList>
    </citation>
    <scope>NUCLEOTIDE SEQUENCE [LARGE SCALE GENOMIC DNA]</scope>
</reference>
<reference key="6">
    <citation type="journal article" date="2004" name="Genome Res.">
        <title>The status, quality, and expansion of the NIH full-length cDNA project: the Mammalian Gene Collection (MGC).</title>
        <authorList>
            <consortium name="The MGC Project Team"/>
        </authorList>
    </citation>
    <scope>NUCLEOTIDE SEQUENCE [LARGE SCALE MRNA] (ISOFORMS 2 AND 3)</scope>
</reference>
<reference key="7">
    <citation type="journal article" date="2004" name="Protein Sci.">
        <title>Signal peptide prediction based on analysis of experimentally verified cleavage sites.</title>
        <authorList>
            <person name="Zhang Z."/>
            <person name="Henzel W.J."/>
        </authorList>
    </citation>
    <scope>PROTEIN SEQUENCE OF 17-31</scope>
</reference>
<sequence>MTAEFLSLLCLGLCLGYEDEKKNEKPPKPSLHAWPSSVVEAESNVTLKCQAHSQNVTFVLRKVNDSGYKQEQSSAENEAEFPFTDLKPKDAGRYFCAYKTTASHEWSESSEHLQLVVTDKHDELEAPSMKTDTRTIFVAIFSCISILLLFLSVFIIYRCSQHSSSSEESTKRTSHSKLPEQEAAEADLSNMERVSLSTADPQGVTYAELSTSALSEAASDTTQEPPGSHEYAALKV</sequence>
<protein>
    <recommendedName>
        <fullName>V-set and transmembrane domain-containing protein 1</fullName>
    </recommendedName>
    <alternativeName>
        <fullName>Signal inhibitory receptor on leukocytes-1</fullName>
        <shortName>SIRL-1</shortName>
    </alternativeName>
</protein>
<feature type="signal peptide" evidence="5">
    <location>
        <begin position="1"/>
        <end position="16"/>
    </location>
</feature>
<feature type="chain" id="PRO_0000272269" description="V-set and transmembrane domain-containing protein 1">
    <location>
        <begin position="17"/>
        <end position="236"/>
    </location>
</feature>
<feature type="topological domain" description="Extracellular" evidence="1">
    <location>
        <begin position="17"/>
        <end position="135"/>
    </location>
</feature>
<feature type="transmembrane region" description="Helical" evidence="1">
    <location>
        <begin position="136"/>
        <end position="156"/>
    </location>
</feature>
<feature type="topological domain" description="Cytoplasmic" evidence="1">
    <location>
        <begin position="157"/>
        <end position="236"/>
    </location>
</feature>
<feature type="domain" description="Ig-like V-type">
    <location>
        <begin position="27"/>
        <end position="114"/>
    </location>
</feature>
<feature type="region of interest" description="Disordered" evidence="3">
    <location>
        <begin position="166"/>
        <end position="200"/>
    </location>
</feature>
<feature type="region of interest" description="Disordered" evidence="3">
    <location>
        <begin position="215"/>
        <end position="236"/>
    </location>
</feature>
<feature type="short sequence motif" description="ITIM motif 1">
    <location>
        <begin position="204"/>
        <end position="209"/>
    </location>
</feature>
<feature type="short sequence motif" description="ITIM motif 2">
    <location>
        <begin position="229"/>
        <end position="234"/>
    </location>
</feature>
<feature type="glycosylation site" description="N-linked (GlcNAc...) asparagine" evidence="1">
    <location>
        <position position="44"/>
    </location>
</feature>
<feature type="glycosylation site" description="N-linked (GlcNAc...) asparagine" evidence="1">
    <location>
        <position position="55"/>
    </location>
</feature>
<feature type="disulfide bond" evidence="2">
    <location>
        <begin position="49"/>
        <end position="96"/>
    </location>
</feature>
<feature type="splice variant" id="VSP_022381" description="In isoform 2." evidence="9 10">
    <original>DTRTIFVAIFSCISILLLFLSVFIIYRCSQHS</original>
    <variation>G</variation>
    <location>
        <begin position="132"/>
        <end position="163"/>
    </location>
</feature>
<feature type="splice variant" id="VSP_022382" description="In isoform 3." evidence="9">
    <original>SSSEESTKRTS</original>
    <variation>ELRERKGREGE</variation>
    <location>
        <begin position="164"/>
        <end position="174"/>
    </location>
</feature>
<feature type="splice variant" id="VSP_022383" description="In isoform 3." evidence="9">
    <location>
        <begin position="175"/>
        <end position="236"/>
    </location>
</feature>
<feature type="sequence variant" id="VAR_030034" description="In dbSNP:rs2433724." evidence="4 7 8">
    <original>S</original>
    <variation>G</variation>
    <location>
        <position position="163"/>
    </location>
</feature>
<evidence type="ECO:0000255" key="1"/>
<evidence type="ECO:0000255" key="2">
    <source>
        <dbReference type="PROSITE-ProRule" id="PRU00114"/>
    </source>
</evidence>
<evidence type="ECO:0000256" key="3">
    <source>
        <dbReference type="SAM" id="MobiDB-lite"/>
    </source>
</evidence>
<evidence type="ECO:0000269" key="4">
    <source>
    </source>
</evidence>
<evidence type="ECO:0000269" key="5">
    <source>
    </source>
</evidence>
<evidence type="ECO:0000269" key="6">
    <source>
    </source>
</evidence>
<evidence type="ECO:0000269" key="7">
    <source>
    </source>
</evidence>
<evidence type="ECO:0000269" key="8">
    <source ref="3"/>
</evidence>
<evidence type="ECO:0000303" key="9">
    <source>
    </source>
</evidence>
<evidence type="ECO:0000303" key="10">
    <source>
    </source>
</evidence>
<evidence type="ECO:0000305" key="11"/>
<organism>
    <name type="scientific">Homo sapiens</name>
    <name type="common">Human</name>
    <dbReference type="NCBI Taxonomy" id="9606"/>
    <lineage>
        <taxon>Eukaryota</taxon>
        <taxon>Metazoa</taxon>
        <taxon>Chordata</taxon>
        <taxon>Craniata</taxon>
        <taxon>Vertebrata</taxon>
        <taxon>Euteleostomi</taxon>
        <taxon>Mammalia</taxon>
        <taxon>Eutheria</taxon>
        <taxon>Euarchontoglires</taxon>
        <taxon>Primates</taxon>
        <taxon>Haplorrhini</taxon>
        <taxon>Catarrhini</taxon>
        <taxon>Hominidae</taxon>
        <taxon>Homo</taxon>
    </lineage>
</organism>
<keyword id="KW-0025">Alternative splicing</keyword>
<keyword id="KW-0202">Cytokine</keyword>
<keyword id="KW-0903">Direct protein sequencing</keyword>
<keyword id="KW-1015">Disulfide bond</keyword>
<keyword id="KW-0325">Glycoprotein</keyword>
<keyword id="KW-0391">Immunity</keyword>
<keyword id="KW-0393">Immunoglobulin domain</keyword>
<keyword id="KW-0472">Membrane</keyword>
<keyword id="KW-1267">Proteomics identification</keyword>
<keyword id="KW-1185">Reference proteome</keyword>
<keyword id="KW-0964">Secreted</keyword>
<keyword id="KW-0732">Signal</keyword>
<keyword id="KW-0812">Transmembrane</keyword>
<keyword id="KW-1133">Transmembrane helix</keyword>
<gene>
    <name type="primary">VSTM1</name>
    <name type="ORF">UNQ3033/PRO9835</name>
</gene>
<accession>Q6UX27</accession>
<accession>B6A8C6</accession>
<accession>D2DJS3</accession>
<accession>D2DJS4</accession>
<accession>Q496B6</accession>
<accession>Q496B7</accession>
<comment type="function">
    <molecule>Isoform 2</molecule>
    <text>Behaves as a cytokine, promoting IL17A secretion by CD4+ T-cells, and differentiation and activation of IL17 producing helper T-cells (TH17).</text>
</comment>
<comment type="function">
    <molecule>Isoform 1</molecule>
    <text>Inhibitory immune receptor involved in the regulation of phagocytes.</text>
</comment>
<comment type="interaction">
    <interactant intactId="EBI-12190699">
        <id>Q6UX27-3</id>
    </interactant>
    <interactant intactId="EBI-17979264">
        <id>Q86Y34</id>
        <label>ADGRG3</label>
    </interactant>
    <organismsDiffer>false</organismsDiffer>
    <experiments>3</experiments>
</comment>
<comment type="interaction">
    <interactant intactId="EBI-12190699">
        <id>Q6UX27-3</id>
    </interactant>
    <interactant intactId="EBI-2606497">
        <id>Q8WW43</id>
        <label>APH1B</label>
    </interactant>
    <organismsDiffer>false</organismsDiffer>
    <experiments>3</experiments>
</comment>
<comment type="interaction">
    <interactant intactId="EBI-12190699">
        <id>Q6UX27-3</id>
    </interactant>
    <interactant intactId="EBI-13059134">
        <id>Q13520</id>
        <label>AQP6</label>
    </interactant>
    <organismsDiffer>false</organismsDiffer>
    <experiments>3</experiments>
</comment>
<comment type="interaction">
    <interactant intactId="EBI-12190699">
        <id>Q6UX27-3</id>
    </interactant>
    <interactant intactId="EBI-11343438">
        <id>Q3SXY8</id>
        <label>ARL13B</label>
    </interactant>
    <organismsDiffer>false</organismsDiffer>
    <experiments>3</experiments>
</comment>
<comment type="interaction">
    <interactant intactId="EBI-12190699">
        <id>Q6UX27-3</id>
    </interactant>
    <interactant intactId="EBI-6657396">
        <id>P19397</id>
        <label>CD53</label>
    </interactant>
    <organismsDiffer>false</organismsDiffer>
    <experiments>3</experiments>
</comment>
<comment type="interaction">
    <interactant intactId="EBI-12190699">
        <id>Q6UX27-3</id>
    </interactant>
    <interactant intactId="EBI-740744">
        <id>O95471</id>
        <label>CLDN7</label>
    </interactant>
    <organismsDiffer>false</organismsDiffer>
    <experiments>3</experiments>
</comment>
<comment type="interaction">
    <interactant intactId="EBI-12190699">
        <id>Q6UX27-3</id>
    </interactant>
    <interactant intactId="EBI-18341636">
        <id>O95484</id>
        <label>CLDN9</label>
    </interactant>
    <organismsDiffer>false</organismsDiffer>
    <experiments>3</experiments>
</comment>
<comment type="interaction">
    <interactant intactId="EBI-12190699">
        <id>Q6UX27-3</id>
    </interactant>
    <interactant intactId="EBI-2873246">
        <id>Q8IUN9</id>
        <label>CLEC10A</label>
    </interactant>
    <organismsDiffer>false</organismsDiffer>
    <experiments>3</experiments>
</comment>
<comment type="interaction">
    <interactant intactId="EBI-12190699">
        <id>Q6UX27-3</id>
    </interactant>
    <interactant intactId="EBI-724524">
        <id>O75208</id>
        <label>COQ9</label>
    </interactant>
    <organismsDiffer>false</organismsDiffer>
    <experiments>3</experiments>
</comment>
<comment type="interaction">
    <interactant intactId="EBI-12190699">
        <id>Q6UX27-3</id>
    </interactant>
    <interactant intactId="EBI-781551">
        <id>Q9Y282</id>
        <label>ERGIC3</label>
    </interactant>
    <organismsDiffer>false</organismsDiffer>
    <experiments>3</experiments>
</comment>
<comment type="interaction">
    <interactant intactId="EBI-12190699">
        <id>Q6UX27-3</id>
    </interactant>
    <interactant intactId="EBI-743099">
        <id>Q969F0</id>
        <label>FATE1</label>
    </interactant>
    <organismsDiffer>false</organismsDiffer>
    <experiments>3</experiments>
</comment>
<comment type="interaction">
    <interactant intactId="EBI-12190699">
        <id>Q6UX27-3</id>
    </interactant>
    <interactant intactId="EBI-4287196">
        <id>Q9UK22</id>
        <label>FBXO2</label>
    </interactant>
    <organismsDiffer>false</organismsDiffer>
    <experiments>3</experiments>
</comment>
<comment type="interaction">
    <interactant intactId="EBI-12190699">
        <id>Q6UX27-3</id>
    </interactant>
    <interactant intactId="EBI-2869867">
        <id>P12314</id>
        <label>FCGR1A</label>
    </interactant>
    <organismsDiffer>false</organismsDiffer>
    <experiments>3</experiments>
</comment>
<comment type="interaction">
    <interactant intactId="EBI-12190699">
        <id>Q6UX27-3</id>
    </interactant>
    <interactant intactId="EBI-12142257">
        <id>Q8TBE3</id>
        <label>FNDC9</label>
    </interactant>
    <organismsDiffer>false</organismsDiffer>
    <experiments>3</experiments>
</comment>
<comment type="interaction">
    <interactant intactId="EBI-12190699">
        <id>Q6UX27-3</id>
    </interactant>
    <interactant intactId="EBI-3909454">
        <id>O95377</id>
        <label>GJB5</label>
    </interactant>
    <organismsDiffer>false</organismsDiffer>
    <experiments>3</experiments>
</comment>
<comment type="interaction">
    <interactant intactId="EBI-12190699">
        <id>Q6UX27-3</id>
    </interactant>
    <interactant intactId="EBI-712073">
        <id>Q8NBJ4</id>
        <label>GOLM1</label>
    </interactant>
    <organismsDiffer>false</organismsDiffer>
    <experiments>3</experiments>
</comment>
<comment type="interaction">
    <interactant intactId="EBI-12190699">
        <id>Q6UX27-3</id>
    </interactant>
    <interactant intactId="EBI-11721746">
        <id>Q8TED1</id>
        <label>GPX8</label>
    </interactant>
    <organismsDiffer>false</organismsDiffer>
    <experiments>3</experiments>
</comment>
<comment type="interaction">
    <interactant intactId="EBI-12190699">
        <id>Q6UX27-3</id>
    </interactant>
    <interactant intactId="EBI-2801937">
        <id>Q9UBK5</id>
        <label>HCST</label>
    </interactant>
    <organismsDiffer>false</organismsDiffer>
    <experiments>3</experiments>
</comment>
<comment type="interaction">
    <interactant intactId="EBI-12190699">
        <id>Q6UX27-3</id>
    </interactant>
    <interactant intactId="EBI-12017638">
        <id>P48051</id>
        <label>KCNJ6</label>
    </interactant>
    <organismsDiffer>false</organismsDiffer>
    <experiments>3</experiments>
</comment>
<comment type="interaction">
    <interactant intactId="EBI-12190699">
        <id>Q6UX27-3</id>
    </interactant>
    <interactant intactId="EBI-2805407">
        <id>P11279</id>
        <label>LAMP1</label>
    </interactant>
    <organismsDiffer>false</organismsDiffer>
    <experiments>3</experiments>
</comment>
<comment type="interaction">
    <interactant intactId="EBI-12190699">
        <id>Q6UX27-3</id>
    </interactant>
    <interactant intactId="EBI-3925442">
        <id>Q9HCJ2</id>
        <label>LRRC4C</label>
    </interactant>
    <organismsDiffer>false</organismsDiffer>
    <experiments>3</experiments>
</comment>
<comment type="interaction">
    <interactant intactId="EBI-12190699">
        <id>Q6UX27-3</id>
    </interactant>
    <interactant intactId="EBI-2830042">
        <id>Q9H8J5</id>
        <label>MANSC1</label>
    </interactant>
    <organismsDiffer>false</organismsDiffer>
    <experiments>3</experiments>
</comment>
<comment type="interaction">
    <interactant intactId="EBI-12190699">
        <id>Q6UX27-3</id>
    </interactant>
    <interactant intactId="EBI-11922631">
        <id>Q5TF39</id>
        <label>MFSD4B</label>
    </interactant>
    <organismsDiffer>false</organismsDiffer>
    <experiments>3</experiments>
</comment>
<comment type="interaction">
    <interactant intactId="EBI-12190699">
        <id>Q6UX27-3</id>
    </interactant>
    <interactant intactId="EBI-5454865">
        <id>Q6IN84</id>
        <label>MRM1</label>
    </interactant>
    <organismsDiffer>false</organismsDiffer>
    <experiments>3</experiments>
</comment>
<comment type="interaction">
    <interactant intactId="EBI-12190699">
        <id>Q6UX27-3</id>
    </interactant>
    <interactant intactId="EBI-722017">
        <id>O43688</id>
        <label>PLPP2</label>
    </interactant>
    <organismsDiffer>false</organismsDiffer>
    <experiments>3</experiments>
</comment>
<comment type="interaction">
    <interactant intactId="EBI-12190699">
        <id>Q6UX27-3</id>
    </interactant>
    <interactant intactId="EBI-20117546">
        <id>Q9H169-2</id>
        <label>STMN4</label>
    </interactant>
    <organismsDiffer>false</organismsDiffer>
    <experiments>3</experiments>
</comment>
<comment type="interaction">
    <interactant intactId="EBI-12190699">
        <id>Q6UX27-3</id>
    </interactant>
    <interactant intactId="EBI-10314986">
        <id>Q9NWD8</id>
        <label>TMEM248</label>
    </interactant>
    <organismsDiffer>false</organismsDiffer>
    <experiments>3</experiments>
</comment>
<comment type="subcellular location">
    <molecule>Isoform 1</molecule>
    <subcellularLocation>
        <location evidence="11">Membrane</location>
        <topology evidence="11">Single-pass membrane protein</topology>
    </subcellularLocation>
</comment>
<comment type="subcellular location">
    <molecule>Isoform 2</molecule>
    <subcellularLocation>
        <location evidence="7">Secreted</location>
    </subcellularLocation>
</comment>
<comment type="alternative products">
    <event type="alternative splicing"/>
    <isoform>
        <id>Q6UX27-1</id>
        <name>1</name>
        <sequence type="displayed"/>
    </isoform>
    <isoform>
        <id>Q6UX27-2</id>
        <name>2</name>
        <name>VSTM1-v2</name>
        <sequence type="described" ref="VSP_022381"/>
    </isoform>
    <isoform>
        <id>Q6UX27-3</id>
        <name>3</name>
        <sequence type="described" ref="VSP_022382 VSP_022383"/>
    </isoform>
</comment>
<comment type="tissue specificity">
    <text evidence="6">Expressed on myeloid (neutrophils, eosinophils and monocytes) but not on lymphoid cells.</text>
</comment>
<comment type="domain">
    <text>Contains 2 copies of a cytoplasmic motif that is referred to as the immunoreceptor tyrosine-based inhibitor motif (ITIM). This motif is involved in modulation of cellular responses. The phosphorylated ITIM motif can bind the SH2 domain of several SH2-containing phosphatases. Both motives are required for full inhibition of FCER1A-mediated degranulation.</text>
</comment>
<comment type="PTM">
    <text>Isoform 2 is N-glycosylated.</text>
</comment>
<comment type="miscellaneous">
    <molecule>Isoform 2</molecule>
    <text evidence="11">Mainly detected in immune tissues and cells.</text>
</comment>
<comment type="miscellaneous">
    <molecule>Isoform 3</molecule>
    <text evidence="11">May be produced at very low levels due to a premature stop codon in the mRNA, leading to nonsense-mediated mRNA decay.</text>
</comment>